<organism>
    <name type="scientific">Cyanothece sp. (strain PCC 7425 / ATCC 29141)</name>
    <dbReference type="NCBI Taxonomy" id="395961"/>
    <lineage>
        <taxon>Bacteria</taxon>
        <taxon>Bacillati</taxon>
        <taxon>Cyanobacteriota</taxon>
        <taxon>Cyanophyceae</taxon>
        <taxon>Gomontiellales</taxon>
        <taxon>Cyanothecaceae</taxon>
        <taxon>Cyanothece</taxon>
    </lineage>
</organism>
<dbReference type="EC" id="2.1.3.15" evidence="1"/>
<dbReference type="EMBL" id="CP001344">
    <property type="protein sequence ID" value="ACL42792.1"/>
    <property type="molecule type" value="Genomic_DNA"/>
</dbReference>
<dbReference type="SMR" id="B8HSZ5"/>
<dbReference type="STRING" id="395961.Cyan7425_0400"/>
<dbReference type="KEGG" id="cyn:Cyan7425_0400"/>
<dbReference type="eggNOG" id="COG0825">
    <property type="taxonomic scope" value="Bacteria"/>
</dbReference>
<dbReference type="HOGENOM" id="CLU_015486_0_2_3"/>
<dbReference type="OrthoDB" id="9808023at2"/>
<dbReference type="UniPathway" id="UPA00655">
    <property type="reaction ID" value="UER00711"/>
</dbReference>
<dbReference type="GO" id="GO:0009317">
    <property type="term" value="C:acetyl-CoA carboxylase complex"/>
    <property type="evidence" value="ECO:0007669"/>
    <property type="project" value="InterPro"/>
</dbReference>
<dbReference type="GO" id="GO:0003989">
    <property type="term" value="F:acetyl-CoA carboxylase activity"/>
    <property type="evidence" value="ECO:0007669"/>
    <property type="project" value="InterPro"/>
</dbReference>
<dbReference type="GO" id="GO:0005524">
    <property type="term" value="F:ATP binding"/>
    <property type="evidence" value="ECO:0007669"/>
    <property type="project" value="UniProtKB-KW"/>
</dbReference>
<dbReference type="GO" id="GO:0016743">
    <property type="term" value="F:carboxyl- or carbamoyltransferase activity"/>
    <property type="evidence" value="ECO:0007669"/>
    <property type="project" value="UniProtKB-UniRule"/>
</dbReference>
<dbReference type="GO" id="GO:0006633">
    <property type="term" value="P:fatty acid biosynthetic process"/>
    <property type="evidence" value="ECO:0007669"/>
    <property type="project" value="UniProtKB-KW"/>
</dbReference>
<dbReference type="GO" id="GO:2001295">
    <property type="term" value="P:malonyl-CoA biosynthetic process"/>
    <property type="evidence" value="ECO:0007669"/>
    <property type="project" value="UniProtKB-UniRule"/>
</dbReference>
<dbReference type="Gene3D" id="3.90.226.10">
    <property type="entry name" value="2-enoyl-CoA Hydratase, Chain A, domain 1"/>
    <property type="match status" value="1"/>
</dbReference>
<dbReference type="HAMAP" id="MF_00823">
    <property type="entry name" value="AcetylCoA_CT_alpha"/>
    <property type="match status" value="1"/>
</dbReference>
<dbReference type="InterPro" id="IPR001095">
    <property type="entry name" value="Acetyl_CoA_COase_a_su"/>
</dbReference>
<dbReference type="InterPro" id="IPR029045">
    <property type="entry name" value="ClpP/crotonase-like_dom_sf"/>
</dbReference>
<dbReference type="InterPro" id="IPR011763">
    <property type="entry name" value="COA_CT_C"/>
</dbReference>
<dbReference type="NCBIfam" id="TIGR00513">
    <property type="entry name" value="accA"/>
    <property type="match status" value="1"/>
</dbReference>
<dbReference type="NCBIfam" id="NF041504">
    <property type="entry name" value="AccA_sub"/>
    <property type="match status" value="1"/>
</dbReference>
<dbReference type="NCBIfam" id="NF004344">
    <property type="entry name" value="PRK05724.1"/>
    <property type="match status" value="1"/>
</dbReference>
<dbReference type="PANTHER" id="PTHR42853">
    <property type="entry name" value="ACETYL-COENZYME A CARBOXYLASE CARBOXYL TRANSFERASE SUBUNIT ALPHA"/>
    <property type="match status" value="1"/>
</dbReference>
<dbReference type="PANTHER" id="PTHR42853:SF3">
    <property type="entry name" value="ACETYL-COENZYME A CARBOXYLASE CARBOXYL TRANSFERASE SUBUNIT ALPHA, CHLOROPLASTIC"/>
    <property type="match status" value="1"/>
</dbReference>
<dbReference type="Pfam" id="PF03255">
    <property type="entry name" value="ACCA"/>
    <property type="match status" value="1"/>
</dbReference>
<dbReference type="PRINTS" id="PR01069">
    <property type="entry name" value="ACCCTRFRASEA"/>
</dbReference>
<dbReference type="SUPFAM" id="SSF52096">
    <property type="entry name" value="ClpP/crotonase"/>
    <property type="match status" value="1"/>
</dbReference>
<dbReference type="PROSITE" id="PS50989">
    <property type="entry name" value="COA_CT_CTER"/>
    <property type="match status" value="1"/>
</dbReference>
<sequence>MATERKPILLEFEKPLAELEAQINQVRQKSAELGVDVSDQIRELENNSTQLRQEIFSKLTPSQKLQLARHPRRPSTLDYIQAISDEWMELHGDRYGSDDPAIVAGVARLAGQPVVMLGQQKGRDTKDNVARNFGMASPSGYRKAIRIMEHADRFGMPILTFIDTPAAWAGIEAEQYGQGEAIAYNLREMFRLEVPIICTVIGEGGSGGALGIGVGDRLLMFEHAIYSVAPPEACAAILWRDAQKAPLAAEALKITAADLQKLGLIDEILPEPLGGAHVDPVGATEILKTSLIAHLRQLSQMSSPQRRELRYQKFRRMGIFTQSAA</sequence>
<feature type="chain" id="PRO_1000148738" description="Acetyl-coenzyme A carboxylase carboxyl transferase subunit alpha">
    <location>
        <begin position="1"/>
        <end position="325"/>
    </location>
</feature>
<feature type="domain" description="CoA carboxyltransferase C-terminal" evidence="2">
    <location>
        <begin position="43"/>
        <end position="297"/>
    </location>
</feature>
<keyword id="KW-0067">ATP-binding</keyword>
<keyword id="KW-0963">Cytoplasm</keyword>
<keyword id="KW-0275">Fatty acid biosynthesis</keyword>
<keyword id="KW-0276">Fatty acid metabolism</keyword>
<keyword id="KW-0444">Lipid biosynthesis</keyword>
<keyword id="KW-0443">Lipid metabolism</keyword>
<keyword id="KW-0547">Nucleotide-binding</keyword>
<keyword id="KW-0808">Transferase</keyword>
<proteinExistence type="inferred from homology"/>
<protein>
    <recommendedName>
        <fullName evidence="1">Acetyl-coenzyme A carboxylase carboxyl transferase subunit alpha</fullName>
        <shortName evidence="1">ACCase subunit alpha</shortName>
        <shortName evidence="1">Acetyl-CoA carboxylase carboxyltransferase subunit alpha</shortName>
        <ecNumber evidence="1">2.1.3.15</ecNumber>
    </recommendedName>
</protein>
<gene>
    <name evidence="1" type="primary">accA</name>
    <name type="ordered locus">Cyan7425_0400</name>
</gene>
<evidence type="ECO:0000255" key="1">
    <source>
        <dbReference type="HAMAP-Rule" id="MF_00823"/>
    </source>
</evidence>
<evidence type="ECO:0000255" key="2">
    <source>
        <dbReference type="PROSITE-ProRule" id="PRU01137"/>
    </source>
</evidence>
<reference key="1">
    <citation type="journal article" date="2011" name="MBio">
        <title>Novel metabolic attributes of the genus Cyanothece, comprising a group of unicellular nitrogen-fixing Cyanobacteria.</title>
        <authorList>
            <person name="Bandyopadhyay A."/>
            <person name="Elvitigala T."/>
            <person name="Welsh E."/>
            <person name="Stockel J."/>
            <person name="Liberton M."/>
            <person name="Min H."/>
            <person name="Sherman L.A."/>
            <person name="Pakrasi H.B."/>
        </authorList>
    </citation>
    <scope>NUCLEOTIDE SEQUENCE [LARGE SCALE GENOMIC DNA]</scope>
    <source>
        <strain>PCC 7425 / ATCC 29141</strain>
    </source>
</reference>
<comment type="function">
    <text evidence="1">Component of the acetyl coenzyme A carboxylase (ACC) complex. First, biotin carboxylase catalyzes the carboxylation of biotin on its carrier protein (BCCP) and then the CO(2) group is transferred by the carboxyltransferase to acetyl-CoA to form malonyl-CoA.</text>
</comment>
<comment type="catalytic activity">
    <reaction evidence="1">
        <text>N(6)-carboxybiotinyl-L-lysyl-[protein] + acetyl-CoA = N(6)-biotinyl-L-lysyl-[protein] + malonyl-CoA</text>
        <dbReference type="Rhea" id="RHEA:54728"/>
        <dbReference type="Rhea" id="RHEA-COMP:10505"/>
        <dbReference type="Rhea" id="RHEA-COMP:10506"/>
        <dbReference type="ChEBI" id="CHEBI:57288"/>
        <dbReference type="ChEBI" id="CHEBI:57384"/>
        <dbReference type="ChEBI" id="CHEBI:83144"/>
        <dbReference type="ChEBI" id="CHEBI:83145"/>
        <dbReference type="EC" id="2.1.3.15"/>
    </reaction>
</comment>
<comment type="pathway">
    <text evidence="1">Lipid metabolism; malonyl-CoA biosynthesis; malonyl-CoA from acetyl-CoA: step 1/1.</text>
</comment>
<comment type="subunit">
    <text evidence="1">Acetyl-CoA carboxylase is a heterohexamer composed of biotin carboxyl carrier protein (AccB), biotin carboxylase (AccC) and two subunits each of ACCase subunit alpha (AccA) and ACCase subunit beta (AccD).</text>
</comment>
<comment type="subcellular location">
    <subcellularLocation>
        <location evidence="1">Cytoplasm</location>
    </subcellularLocation>
</comment>
<comment type="similarity">
    <text evidence="1">Belongs to the AccA family.</text>
</comment>
<accession>B8HSZ5</accession>
<name>ACCA_CYAP4</name>